<feature type="chain" id="PRO_0000166978" description="Probable glycine dehydrogenase (decarboxylating) subunit 1">
    <location>
        <begin position="1"/>
        <end position="450"/>
    </location>
</feature>
<proteinExistence type="inferred from homology"/>
<name>GCSPA_STAHJ</name>
<organism>
    <name type="scientific">Staphylococcus haemolyticus (strain JCSC1435)</name>
    <dbReference type="NCBI Taxonomy" id="279808"/>
    <lineage>
        <taxon>Bacteria</taxon>
        <taxon>Bacillati</taxon>
        <taxon>Bacillota</taxon>
        <taxon>Bacilli</taxon>
        <taxon>Bacillales</taxon>
        <taxon>Staphylococcaceae</taxon>
        <taxon>Staphylococcus</taxon>
    </lineage>
</organism>
<evidence type="ECO:0000255" key="1">
    <source>
        <dbReference type="HAMAP-Rule" id="MF_00712"/>
    </source>
</evidence>
<reference key="1">
    <citation type="journal article" date="2005" name="J. Bacteriol.">
        <title>Whole-genome sequencing of Staphylococcus haemolyticus uncovers the extreme plasticity of its genome and the evolution of human-colonizing staphylococcal species.</title>
        <authorList>
            <person name="Takeuchi F."/>
            <person name="Watanabe S."/>
            <person name="Baba T."/>
            <person name="Yuzawa H."/>
            <person name="Ito T."/>
            <person name="Morimoto Y."/>
            <person name="Kuroda M."/>
            <person name="Cui L."/>
            <person name="Takahashi M."/>
            <person name="Ankai A."/>
            <person name="Baba S."/>
            <person name="Fukui S."/>
            <person name="Lee J.C."/>
            <person name="Hiramatsu K."/>
        </authorList>
    </citation>
    <scope>NUCLEOTIDE SEQUENCE [LARGE SCALE GENOMIC DNA]</scope>
    <source>
        <strain>JCSC1435</strain>
    </source>
</reference>
<keyword id="KW-0560">Oxidoreductase</keyword>
<protein>
    <recommendedName>
        <fullName evidence="1">Probable glycine dehydrogenase (decarboxylating) subunit 1</fullName>
        <ecNumber evidence="1">1.4.4.2</ecNumber>
    </recommendedName>
    <alternativeName>
        <fullName evidence="1">Glycine cleavage system P-protein subunit 1</fullName>
    </alternativeName>
    <alternativeName>
        <fullName evidence="1">Glycine decarboxylase subunit 1</fullName>
    </alternativeName>
    <alternativeName>
        <fullName evidence="1">Glycine dehydrogenase (aminomethyl-transferring) subunit 1</fullName>
    </alternativeName>
</protein>
<comment type="function">
    <text evidence="1">The glycine cleavage system catalyzes the degradation of glycine. The P protein binds the alpha-amino group of glycine through its pyridoxal phosphate cofactor; CO(2) is released and the remaining methylamine moiety is then transferred to the lipoamide cofactor of the H protein.</text>
</comment>
<comment type="catalytic activity">
    <reaction evidence="1">
        <text>N(6)-[(R)-lipoyl]-L-lysyl-[glycine-cleavage complex H protein] + glycine + H(+) = N(6)-[(R)-S(8)-aminomethyldihydrolipoyl]-L-lysyl-[glycine-cleavage complex H protein] + CO2</text>
        <dbReference type="Rhea" id="RHEA:24304"/>
        <dbReference type="Rhea" id="RHEA-COMP:10494"/>
        <dbReference type="Rhea" id="RHEA-COMP:10495"/>
        <dbReference type="ChEBI" id="CHEBI:15378"/>
        <dbReference type="ChEBI" id="CHEBI:16526"/>
        <dbReference type="ChEBI" id="CHEBI:57305"/>
        <dbReference type="ChEBI" id="CHEBI:83099"/>
        <dbReference type="ChEBI" id="CHEBI:83143"/>
        <dbReference type="EC" id="1.4.4.2"/>
    </reaction>
</comment>
<comment type="subunit">
    <text evidence="1">The glycine cleavage system is composed of four proteins: P, T, L and H. In this organism, the P 'protein' is a heterodimer of two subunits.</text>
</comment>
<comment type="similarity">
    <text evidence="1">Belongs to the GcvP family. N-terminal subunit subfamily.</text>
</comment>
<gene>
    <name evidence="1" type="primary">gcvPA</name>
    <name type="ordered locus">SH1380</name>
</gene>
<accession>Q4L6N6</accession>
<dbReference type="EC" id="1.4.4.2" evidence="1"/>
<dbReference type="EMBL" id="AP006716">
    <property type="protein sequence ID" value="BAE04689.1"/>
    <property type="molecule type" value="Genomic_DNA"/>
</dbReference>
<dbReference type="RefSeq" id="WP_011275676.1">
    <property type="nucleotide sequence ID" value="NC_007168.1"/>
</dbReference>
<dbReference type="SMR" id="Q4L6N6"/>
<dbReference type="KEGG" id="sha:SH1380"/>
<dbReference type="eggNOG" id="COG0403">
    <property type="taxonomic scope" value="Bacteria"/>
</dbReference>
<dbReference type="HOGENOM" id="CLU_004620_0_2_9"/>
<dbReference type="OrthoDB" id="9771867at2"/>
<dbReference type="Proteomes" id="UP000000543">
    <property type="component" value="Chromosome"/>
</dbReference>
<dbReference type="GO" id="GO:0004375">
    <property type="term" value="F:glycine dehydrogenase (decarboxylating) activity"/>
    <property type="evidence" value="ECO:0007669"/>
    <property type="project" value="UniProtKB-EC"/>
</dbReference>
<dbReference type="GO" id="GO:0019464">
    <property type="term" value="P:glycine decarboxylation via glycine cleavage system"/>
    <property type="evidence" value="ECO:0007669"/>
    <property type="project" value="UniProtKB-UniRule"/>
</dbReference>
<dbReference type="GO" id="GO:0009116">
    <property type="term" value="P:nucleoside metabolic process"/>
    <property type="evidence" value="ECO:0007669"/>
    <property type="project" value="InterPro"/>
</dbReference>
<dbReference type="CDD" id="cd00613">
    <property type="entry name" value="GDC-P"/>
    <property type="match status" value="1"/>
</dbReference>
<dbReference type="Gene3D" id="3.90.1150.10">
    <property type="entry name" value="Aspartate Aminotransferase, domain 1"/>
    <property type="match status" value="1"/>
</dbReference>
<dbReference type="Gene3D" id="3.40.640.10">
    <property type="entry name" value="Type I PLP-dependent aspartate aminotransferase-like (Major domain)"/>
    <property type="match status" value="1"/>
</dbReference>
<dbReference type="HAMAP" id="MF_00712">
    <property type="entry name" value="GcvPA"/>
    <property type="match status" value="1"/>
</dbReference>
<dbReference type="InterPro" id="IPR023010">
    <property type="entry name" value="GcvPA"/>
</dbReference>
<dbReference type="InterPro" id="IPR049315">
    <property type="entry name" value="GDC-P_N"/>
</dbReference>
<dbReference type="InterPro" id="IPR020581">
    <property type="entry name" value="GDC_P"/>
</dbReference>
<dbReference type="InterPro" id="IPR015424">
    <property type="entry name" value="PyrdxlP-dep_Trfase"/>
</dbReference>
<dbReference type="InterPro" id="IPR015421">
    <property type="entry name" value="PyrdxlP-dep_Trfase_major"/>
</dbReference>
<dbReference type="InterPro" id="IPR015422">
    <property type="entry name" value="PyrdxlP-dep_Trfase_small"/>
</dbReference>
<dbReference type="NCBIfam" id="NF001696">
    <property type="entry name" value="PRK00451.1"/>
    <property type="match status" value="1"/>
</dbReference>
<dbReference type="PANTHER" id="PTHR42806">
    <property type="entry name" value="GLYCINE CLEAVAGE SYSTEM P-PROTEIN"/>
    <property type="match status" value="1"/>
</dbReference>
<dbReference type="PANTHER" id="PTHR42806:SF1">
    <property type="entry name" value="GLYCINE DEHYDROGENASE (DECARBOXYLATING)"/>
    <property type="match status" value="1"/>
</dbReference>
<dbReference type="Pfam" id="PF02347">
    <property type="entry name" value="GDC-P"/>
    <property type="match status" value="1"/>
</dbReference>
<dbReference type="PIRSF" id="PIRSF006815">
    <property type="entry name" value="GcvPA"/>
    <property type="match status" value="1"/>
</dbReference>
<dbReference type="SUPFAM" id="SSF53383">
    <property type="entry name" value="PLP-dependent transferases"/>
    <property type="match status" value="1"/>
</dbReference>
<sequence length="450" mass="49697">MSHRYIPLTEKDKKEMLDKIGASSINELFGDVPKDILLNRDLNIASGEAETSLLRRLNTVANKNVTKETHASFLGAGVYDHYAPAVVDAMISRSEFYTAYTPYQPEISQGELQAIFEFQTLICELTDMDVANSSMYDGITSFAEACILAFNHTKKNKIVVSKGLHYQALQVLKTYVKVREEFEIVEVDLDGTITDLEKLEQAVDDETAAVAVQYPNFYGSVEDLEKIQSFIEGKKALFIVYANPLALGLLTPPGSFGADIVVGDTQPFGIPTQFGGPHCGYFATTKKLMRKVPGRLVGQTQDDEGNRGFVLTLQAREQHIRRDKATSNICSNQALNALASSIAMSALGKQGIYDIAVQNLEHANYAKNQFKDNGFEVLDGTSFNEFVVKFDQPIKDINKKLAKHGFIGGFDLGEASADFENHMLIAVTELRTKDEIDTFVKKAGELNGSK</sequence>